<protein>
    <recommendedName>
        <fullName>Probable proteasome subunit alpha type-3</fullName>
    </recommendedName>
    <alternativeName>
        <fullName>26S proteasome alpha-type subunit PRE9</fullName>
    </alternativeName>
    <alternativeName>
        <fullName>Multicatalytic endopeptidase complex subunit PRE9</fullName>
    </alternativeName>
</protein>
<comment type="function">
    <text evidence="1">The proteasome degrades poly-ubiquitinated proteins in the cytoplasm and in the nucleus. It is essential for the regulated turnover of proteins and for the removal of misfolded proteins. The proteasome is a multicatalytic proteinase complex that is characterized by its ability to cleave peptides with Arg, Phe, Tyr, Leu, and Glu adjacent to the leaving group at neutral or slightly basic pH. It has an ATP-dependent proteolytic activity (By similarity).</text>
</comment>
<comment type="subunit">
    <text evidence="1">The 26S proteasome consists of a 20S proteasome core and two 19S regulatory subunits. The 20S proteasome core is composed of 28 subunits that are arranged in four stacked rings, resulting in a barrel-shaped structure. The two end rings are each formed by seven alpha subunits, and the two central rings are each formed by seven beta subunits. The catalytic chamber with the active sites is on the inside of the barrel (By similarity).</text>
</comment>
<comment type="subcellular location">
    <subcellularLocation>
        <location evidence="1">Cytoplasm</location>
    </subcellularLocation>
    <subcellularLocation>
        <location evidence="1">Nucleus</location>
    </subcellularLocation>
</comment>
<comment type="developmental stage">
    <text evidence="3">Expressed in late sporogonial stages.</text>
</comment>
<comment type="similarity">
    <text evidence="2">Belongs to the peptidase T1A family.</text>
</comment>
<gene>
    <name type="primary">PRE9</name>
    <name type="ordered locus">ECU05_1340</name>
</gene>
<name>PSA3_ENCCU</name>
<accession>Q8SRU7</accession>
<proteinExistence type="evidence at protein level"/>
<evidence type="ECO:0000250" key="1"/>
<evidence type="ECO:0000255" key="2">
    <source>
        <dbReference type="PROSITE-ProRule" id="PRU00808"/>
    </source>
</evidence>
<evidence type="ECO:0000269" key="3">
    <source>
    </source>
</evidence>
<sequence>MDDNKPKSNTFTDEGRLPQVEFAIKNVSRAGTIIGYVCSDGVVLMGVNKEPTNGPMEKIYQLSDSIYCVLCGLFGDAMELKRYARIKAQEVLERFGVECPLTTLCKFVGQRKQAFTQYAGTRPFGVSFLYAGVIDGKYALMSTDPSGTSNRWKGMCYGENEEAINRGLKNDFPEDEMDMKTATVEILRLLGKARELGPKEADRLEILHFSKDCKKYLPCDEVLKLLEEIHAK</sequence>
<dbReference type="EMBL" id="AL590445">
    <property type="protein sequence ID" value="CAD26654.1"/>
    <property type="molecule type" value="Genomic_DNA"/>
</dbReference>
<dbReference type="RefSeq" id="NP_597477.1">
    <property type="nucleotide sequence ID" value="NM_001041343.1"/>
</dbReference>
<dbReference type="SMR" id="Q8SRU7"/>
<dbReference type="FunCoup" id="Q8SRU7">
    <property type="interactions" value="266"/>
</dbReference>
<dbReference type="STRING" id="284813.Q8SRU7"/>
<dbReference type="GeneID" id="859143"/>
<dbReference type="KEGG" id="ecu:ECU05_1340"/>
<dbReference type="VEuPathDB" id="MicrosporidiaDB:ECU05_1340"/>
<dbReference type="HOGENOM" id="CLU_035750_4_3_1"/>
<dbReference type="InParanoid" id="Q8SRU7"/>
<dbReference type="OMA" id="YVLNDNM"/>
<dbReference type="OrthoDB" id="431557at2759"/>
<dbReference type="Proteomes" id="UP000000819">
    <property type="component" value="Chromosome V"/>
</dbReference>
<dbReference type="GO" id="GO:0005737">
    <property type="term" value="C:cytoplasm"/>
    <property type="evidence" value="ECO:0007669"/>
    <property type="project" value="UniProtKB-SubCell"/>
</dbReference>
<dbReference type="GO" id="GO:0005634">
    <property type="term" value="C:nucleus"/>
    <property type="evidence" value="ECO:0007669"/>
    <property type="project" value="UniProtKB-SubCell"/>
</dbReference>
<dbReference type="GO" id="GO:0019773">
    <property type="term" value="C:proteasome core complex, alpha-subunit complex"/>
    <property type="evidence" value="ECO:0000250"/>
    <property type="project" value="UniProtKB"/>
</dbReference>
<dbReference type="GO" id="GO:0051603">
    <property type="term" value="P:proteolysis involved in protein catabolic process"/>
    <property type="evidence" value="ECO:0007669"/>
    <property type="project" value="InterPro"/>
</dbReference>
<dbReference type="Gene3D" id="3.60.20.10">
    <property type="entry name" value="Glutamine Phosphoribosylpyrophosphate, subunit 1, domain 1"/>
    <property type="match status" value="1"/>
</dbReference>
<dbReference type="InterPro" id="IPR029055">
    <property type="entry name" value="Ntn_hydrolases_N"/>
</dbReference>
<dbReference type="InterPro" id="IPR050115">
    <property type="entry name" value="Proteasome_alpha"/>
</dbReference>
<dbReference type="InterPro" id="IPR023332">
    <property type="entry name" value="Proteasome_alpha-type"/>
</dbReference>
<dbReference type="InterPro" id="IPR001353">
    <property type="entry name" value="Proteasome_sua/b"/>
</dbReference>
<dbReference type="PANTHER" id="PTHR11599">
    <property type="entry name" value="PROTEASOME SUBUNIT ALPHA/BETA"/>
    <property type="match status" value="1"/>
</dbReference>
<dbReference type="Pfam" id="PF00227">
    <property type="entry name" value="Proteasome"/>
    <property type="match status" value="1"/>
</dbReference>
<dbReference type="SUPFAM" id="SSF56235">
    <property type="entry name" value="N-terminal nucleophile aminohydrolases (Ntn hydrolases)"/>
    <property type="match status" value="1"/>
</dbReference>
<dbReference type="PROSITE" id="PS51475">
    <property type="entry name" value="PROTEASOME_ALPHA_2"/>
    <property type="match status" value="1"/>
</dbReference>
<keyword id="KW-0963">Cytoplasm</keyword>
<keyword id="KW-0539">Nucleus</keyword>
<keyword id="KW-0647">Proteasome</keyword>
<keyword id="KW-1185">Reference proteome</keyword>
<organism>
    <name type="scientific">Encephalitozoon cuniculi (strain GB-M1)</name>
    <name type="common">Microsporidian parasite</name>
    <dbReference type="NCBI Taxonomy" id="284813"/>
    <lineage>
        <taxon>Eukaryota</taxon>
        <taxon>Fungi</taxon>
        <taxon>Fungi incertae sedis</taxon>
        <taxon>Microsporidia</taxon>
        <taxon>Unikaryonidae</taxon>
        <taxon>Encephalitozoon</taxon>
    </lineage>
</organism>
<reference key="1">
    <citation type="journal article" date="2001" name="Nature">
        <title>Genome sequence and gene compaction of the eukaryote parasite Encephalitozoon cuniculi.</title>
        <authorList>
            <person name="Katinka M.D."/>
            <person name="Duprat S."/>
            <person name="Cornillot E."/>
            <person name="Metenier G."/>
            <person name="Thomarat F."/>
            <person name="Prensier G."/>
            <person name="Barbe V."/>
            <person name="Peyretaillade E."/>
            <person name="Brottier P."/>
            <person name="Wincker P."/>
            <person name="Delbac F."/>
            <person name="El Alaoui H."/>
            <person name="Peyret P."/>
            <person name="Saurin W."/>
            <person name="Gouy M."/>
            <person name="Weissenbach J."/>
            <person name="Vivares C.P."/>
        </authorList>
    </citation>
    <scope>NUCLEOTIDE SEQUENCE [LARGE SCALE GENOMIC DNA]</scope>
    <source>
        <strain>GB-M1</strain>
    </source>
</reference>
<reference key="2">
    <citation type="journal article" date="2006" name="Proteomics">
        <title>Proteomic analysis of the eukaryotic parasite Encephalitozoon cuniculi (microsporidia): a reference map for proteins expressed in late sporogonial stages.</title>
        <authorList>
            <person name="Brosson D."/>
            <person name="Kuhn L."/>
            <person name="Delbac F."/>
            <person name="Garin J."/>
            <person name="Vivares C.P."/>
            <person name="Texier C."/>
        </authorList>
    </citation>
    <scope>IDENTIFICATION BY MASS SPECTROMETRY [LARGE SCALE ANALYSIS]</scope>
    <scope>DEVELOPMENTAL STAGE</scope>
</reference>
<feature type="chain" id="PRO_0000382755" description="Probable proteasome subunit alpha type-3">
    <location>
        <begin position="1"/>
        <end position="232"/>
    </location>
</feature>